<gene>
    <name evidence="7" type="primary">ECPAS</name>
    <name type="synonym">ECM29</name>
    <name type="synonym">KIAA0368</name>
</gene>
<keyword id="KW-0007">Acetylation</keyword>
<keyword id="KW-0025">Alternative splicing</keyword>
<keyword id="KW-0963">Cytoplasm</keyword>
<keyword id="KW-0968">Cytoplasmic vesicle</keyword>
<keyword id="KW-0206">Cytoskeleton</keyword>
<keyword id="KW-0256">Endoplasmic reticulum</keyword>
<keyword id="KW-0967">Endosome</keyword>
<keyword id="KW-1017">Isopeptide bond</keyword>
<keyword id="KW-0539">Nucleus</keyword>
<keyword id="KW-0597">Phosphoprotein</keyword>
<keyword id="KW-0647">Proteasome</keyword>
<keyword id="KW-1267">Proteomics identification</keyword>
<keyword id="KW-1185">Reference proteome</keyword>
<keyword id="KW-0677">Repeat</keyword>
<keyword id="KW-0832">Ubl conjugation</keyword>
<sequence length="1845" mass="204291">MAAAAASASQDELNQLERVFLRLGHAETDEQLQNIISKFLPPVLLKLSSTQEGVRKKVMELLVHLNKRIKSRPKIQLPVETLLVQYQDPAAVSFVTNFTIIYVKMGYPRLPVEKQCELAPTLLTAMEGKPQPQQDSLMHLLIPTLFHMKYPVESSKSASPFNLAEKPKTVQLLLDFMLDVLLMPYGYVLNESQSRQNSSSAQGSSSNSGGGSGIPQPPPGMSFYAAKRVIGDNPWTPEQLEQCKLGIVKFIEAEQVPELEAVLHLVIASSDTRHSVATAADLELKSKQSLIDWNNPAIINKMYKVYLGDIPLKTKEGAVLKPELKRDPVSTRVKLKIVPHLLRSRQAAETFPANIQVVYDGLFGTNTNSKLRTLSLQFVHHICITCPEIKIKPLGPMLLNGLTKLINEYKEDPKLLSMAYSAVGKLSSRMPHLFTKDIALVQQLFEALCKEEPETRLAIQEALSMMVGAYSTLEGAQRTLMEALVASYLIKPEVQVRQVAVKFASTVFPSDHIPSRYLLLLAAGDPREEVHGEAQRVLRCLPGRNRKESTSEQMPSFPEMVYYIQEKASHRMKTPVKYMTGTTVLPFNPAAFGEIVLYLRMCLAHSAGVVPTSQSLADMQDHAPAIGRYIRTLMSSGQMAPSSSNKSGETNPVQIYIGLLQQLLAGVGGLPVMYCLLEAVSVYPEKLATKFVDKTEWIKSLMNNSKEEMRELAALFYSVVVSTVSGNELKSMIEQLIKTTKDNHSPEIQHGSLLALGFTVGRYLAKKKMRMSEQQDLERNADTLPDQEELIQSATETIGSFLDSTSPLLAIAACTALGEIGRNGPLPIPSEGSGFTKLHLVESLLSRIPSSKETNKMKERAIQTLGYFPVGDGDFPHQKLLLQGLMDSVEAKQIELQFTIGEAITSAAIGTSSVAARDAWQMTEEEYTPPAGAKVNDVVPWVLDVILNKHIISPNPHVRQAACIWLLSLVRKLSTHKEVKSHLKEIQSAFVSVLSENDELSQDVASKGLGLVYELGNEQDQQELVSTLVETLMTGKRVKHEVSGETVVFQGGALGKTPDGQGLSTYKELCSLASDLSQPDLVYKFMNLANHHAMWNSRKGAAFGFNVIATRAGEQLAPFLPQLVPRLYRYQFDPNLGIRQAMTSIWNALVTDKSMVDKYLKEILQDLVKNLTSNMWRVRESSCLALNDLLRGRPLDDIIDKLPEIWETLFRVQDDIKESVRKAAELALKTLSKVCVKMCDPAKGAAGQRTIAALLPCLLDKGMMSTVTEVRALSINTLVKISKSAGAMLKPHAPKLIPALLESLSVLEPQVLNYLSLRATEQEKAAMDSARLSAAKSSPMMETINMCLQYLDVSVLGELVPRLCELIRSGVGLGTKGGCASVIVSLTTQCPQDLTPYSGKLMSALLSGLTDRNSVIQKSCAFAMGHLVRTSRDSSTEKLLQKLNGWYMEKEEPIYKTSCALTIHAIGRYSPDVLKNHAKEVLPLAFLGMHEIADEEKSEKEECNLWTEVWQENVPGSFGGIRLYLQELITITQKALQSQSWKMKAQGAIAMASIAKQTSSLVPPYLGMILTALLQGLAGRTWAGKEELLKAIACVVTACSAELEKSVPNQPSTNEILQAVLKECSKENVKYKIVAISCAADILKATKEDRFQEFSNIVIPLIKKNSLESSGVRTTKNEEENEKEKELQLEYLLGAFESLGKAWPRNAETQRCYRQELCKLMCERLKLSTWKVQLGVLQSMNAFFQGLMLLEEEHADPEALAEILLETCKSITYSLENKTYSSVRTEALSVIELLLKKLEESKQWECLTSECRVLLIESLATMEPDSRPELQEKAALLKKTLENLE</sequence>
<proteinExistence type="evidence at protein level"/>
<name>ECM29_HUMAN</name>
<evidence type="ECO:0000250" key="1">
    <source>
        <dbReference type="UniProtKB" id="Q6PDI5"/>
    </source>
</evidence>
<evidence type="ECO:0000255" key="2"/>
<evidence type="ECO:0000256" key="3">
    <source>
        <dbReference type="SAM" id="MobiDB-lite"/>
    </source>
</evidence>
<evidence type="ECO:0000269" key="4">
    <source>
    </source>
</evidence>
<evidence type="ECO:0000269" key="5">
    <source>
    </source>
</evidence>
<evidence type="ECO:0000305" key="6"/>
<evidence type="ECO:0000312" key="7">
    <source>
        <dbReference type="HGNC" id="HGNC:29020"/>
    </source>
</evidence>
<evidence type="ECO:0007744" key="8">
    <source>
    </source>
</evidence>
<evidence type="ECO:0007744" key="9">
    <source>
    </source>
</evidence>
<evidence type="ECO:0007744" key="10">
    <source>
    </source>
</evidence>
<evidence type="ECO:0007744" key="11">
    <source>
    </source>
</evidence>
<evidence type="ECO:0007744" key="12">
    <source>
    </source>
</evidence>
<comment type="function">
    <text evidence="1 4 5">Adapter/scaffolding protein that binds to the 26S proteasome, motor proteins and other compartment specific proteins. May couple the proteasome to different compartments including endosome, endoplasmic reticulum and centrosome. May play a role in ERAD and other enhanced proteolysis (PubMed:15496406). Promotes proteasome dissociation under oxidative stress (By similarity).</text>
</comment>
<comment type="subunit">
    <text evidence="4 5">Non-stoichiometric component of the proteasome; associates with the 26S proteasome. Interacts (via N-terminus) with VPS11, VPS26A, VPS36, RAB11FIP4 and RABEP1. Interacts (via C-terminus) with DCTN1, DCTN2, KIF5B, MYH7, MYH10, MYO10 and ARF6.</text>
</comment>
<comment type="interaction">
    <interactant intactId="EBI-521451">
        <id>Q5VYK3</id>
    </interactant>
    <interactant intactId="EBI-741181">
        <id>Q6RW13</id>
        <label>AGTRAP</label>
    </interactant>
    <organismsDiffer>false</organismsDiffer>
    <experiments>3</experiments>
</comment>
<comment type="interaction">
    <interactant intactId="EBI-521451">
        <id>Q5VYK3</id>
    </interactant>
    <interactant intactId="EBI-11522760">
        <id>Q6RW13-2</id>
        <label>AGTRAP</label>
    </interactant>
    <organismsDiffer>false</organismsDiffer>
    <experiments>3</experiments>
</comment>
<comment type="interaction">
    <interactant intactId="EBI-521451">
        <id>Q5VYK3</id>
    </interactant>
    <interactant intactId="EBI-7996695">
        <id>Q8WZ55</id>
        <label>BSND</label>
    </interactant>
    <organismsDiffer>false</organismsDiffer>
    <experiments>3</experiments>
</comment>
<comment type="interaction">
    <interactant intactId="EBI-521451">
        <id>Q5VYK3</id>
    </interactant>
    <interactant intactId="EBI-2548702">
        <id>Q96DZ9</id>
        <label>CMTM5</label>
    </interactant>
    <organismsDiffer>false</organismsDiffer>
    <experiments>3</experiments>
</comment>
<comment type="interaction">
    <interactant intactId="EBI-521451">
        <id>Q5VYK3</id>
    </interactant>
    <interactant intactId="EBI-11522780">
        <id>Q96DZ9-2</id>
        <label>CMTM5</label>
    </interactant>
    <organismsDiffer>false</organismsDiffer>
    <experiments>3</experiments>
</comment>
<comment type="interaction">
    <interactant intactId="EBI-521451">
        <id>Q5VYK3</id>
    </interactant>
    <interactant intactId="EBI-1054315">
        <id>Q9NX76</id>
        <label>CMTM6</label>
    </interactant>
    <organismsDiffer>false</organismsDiffer>
    <experiments>3</experiments>
</comment>
<comment type="interaction">
    <interactant intactId="EBI-521451">
        <id>Q5VYK3</id>
    </interactant>
    <interactant intactId="EBI-12831978">
        <id>Q6ZPD8</id>
        <label>DGAT2L6</label>
    </interactant>
    <organismsDiffer>false</organismsDiffer>
    <experiments>3</experiments>
</comment>
<comment type="interaction">
    <interactant intactId="EBI-521451">
        <id>Q5VYK3</id>
    </interactant>
    <interactant intactId="EBI-18053395">
        <id>Q7Z5P4</id>
        <label>HSD17B13</label>
    </interactant>
    <organismsDiffer>false</organismsDiffer>
    <experiments>3</experiments>
</comment>
<comment type="interaction">
    <interactant intactId="EBI-521451">
        <id>Q5VYK3</id>
    </interactant>
    <interactant intactId="EBI-944295">
        <id>Q969L2</id>
        <label>MAL2</label>
    </interactant>
    <organismsDiffer>false</organismsDiffer>
    <experiments>5</experiments>
</comment>
<comment type="interaction">
    <interactant intactId="EBI-521451">
        <id>Q5VYK3</id>
    </interactant>
    <interactant intactId="EBI-1044859">
        <id>Q9UBN6</id>
        <label>TNFRSF10D</label>
    </interactant>
    <organismsDiffer>false</organismsDiffer>
    <experiments>3</experiments>
</comment>
<comment type="subcellular location">
    <subcellularLocation>
        <location evidence="4">Endoplasmic reticulum</location>
    </subcellularLocation>
    <subcellularLocation>
        <location evidence="4">Endoplasmic reticulum-Golgi intermediate compartment</location>
    </subcellularLocation>
    <subcellularLocation>
        <location evidence="4">Endosome</location>
    </subcellularLocation>
    <subcellularLocation>
        <location evidence="4">Cytoplasm</location>
        <location evidence="4">Cytoskeleton</location>
        <location evidence="4">Microtubule organizing center</location>
        <location evidence="4">Centrosome</location>
    </subcellularLocation>
    <subcellularLocation>
        <location evidence="4">Nucleus</location>
    </subcellularLocation>
    <subcellularLocation>
        <location evidence="5">Endosome</location>
        <location evidence="5">Multivesicular body</location>
    </subcellularLocation>
    <subcellularLocation>
        <location evidence="5">Cytoplasmic vesicle</location>
    </subcellularLocation>
</comment>
<comment type="alternative products">
    <event type="alternative splicing"/>
    <isoform>
        <id>Q5VYK3-1</id>
        <name>1</name>
        <sequence type="displayed"/>
    </isoform>
    <isoform>
        <id>Q5VYK3-2</id>
        <name>2</name>
        <sequence type="described" ref="VSP_062173"/>
    </isoform>
</comment>
<comment type="similarity">
    <text evidence="6">Belongs to the ECM29 family.</text>
</comment>
<comment type="sequence caution" evidence="6">
    <conflict type="erroneous initiation">
        <sequence resource="EMBL-CDS" id="AAH21127"/>
    </conflict>
    <text>Truncated N-terminus.</text>
</comment>
<comment type="sequence caution" evidence="6">
    <conflict type="frameshift">
        <sequence resource="EMBL" id="AK308313"/>
    </conflict>
</comment>
<comment type="sequence caution" evidence="6">
    <conflict type="frameshift">
        <sequence resource="EMBL-CDS" id="BAG54464"/>
    </conflict>
</comment>
<feature type="initiator methionine" description="Removed" evidence="10 11">
    <location>
        <position position="1"/>
    </location>
</feature>
<feature type="chain" id="PRO_0000212559" description="Proteasome adapter and scaffold protein ECM29">
    <location>
        <begin position="2"/>
        <end position="1845"/>
    </location>
</feature>
<feature type="repeat" description="HEAT 1" evidence="6">
    <location>
        <begin position="28"/>
        <end position="65"/>
    </location>
</feature>
<feature type="repeat" description="HEAT 2" evidence="6">
    <location>
        <begin position="107"/>
        <end position="144"/>
    </location>
</feature>
<feature type="repeat" description="HEAT 3" evidence="6">
    <location>
        <begin position="162"/>
        <end position="205"/>
    </location>
</feature>
<feature type="repeat" description="HEAT 4" evidence="6">
    <location>
        <begin position="326"/>
        <end position="362"/>
    </location>
</feature>
<feature type="repeat" description="HEAT 5" evidence="2">
    <location>
        <begin position="387"/>
        <end position="426"/>
    </location>
</feature>
<feature type="repeat" description="HEAT 6" evidence="2">
    <location>
        <begin position="429"/>
        <end position="466"/>
    </location>
</feature>
<feature type="repeat" description="HEAT 7" evidence="2">
    <location>
        <begin position="469"/>
        <end position="507"/>
    </location>
</feature>
<feature type="repeat" description="HEAT 8" evidence="2">
    <location>
        <begin position="683"/>
        <end position="720"/>
    </location>
</feature>
<feature type="repeat" description="HEAT 9" evidence="2">
    <location>
        <begin position="721"/>
        <end position="759"/>
    </location>
</feature>
<feature type="repeat" description="HEAT 10" evidence="2">
    <location>
        <begin position="783"/>
        <end position="820"/>
    </location>
</feature>
<feature type="repeat" description="HEAT 11" evidence="2">
    <location>
        <begin position="829"/>
        <end position="868"/>
    </location>
</feature>
<feature type="repeat" description="HEAT 12" evidence="2">
    <location>
        <begin position="870"/>
        <end position="907"/>
    </location>
</feature>
<feature type="repeat" description="HEAT 13" evidence="2">
    <location>
        <begin position="931"/>
        <end position="969"/>
    </location>
</feature>
<feature type="repeat" description="HEAT 14" evidence="2">
    <location>
        <begin position="975"/>
        <end position="1012"/>
    </location>
</feature>
<feature type="repeat" description="HEAT 15" evidence="2">
    <location>
        <begin position="1013"/>
        <end position="1050"/>
    </location>
</feature>
<feature type="repeat" description="HEAT 16" evidence="2">
    <location>
        <begin position="1112"/>
        <end position="1149"/>
    </location>
</feature>
<feature type="repeat" description="HEAT 17" evidence="2">
    <location>
        <begin position="1152"/>
        <end position="1189"/>
    </location>
</feature>
<feature type="repeat" description="HEAT 18" evidence="2">
    <location>
        <begin position="1194"/>
        <end position="1231"/>
    </location>
</feature>
<feature type="repeat" description="HEAT 19" evidence="2">
    <location>
        <begin position="1243"/>
        <end position="1281"/>
    </location>
</feature>
<feature type="repeat" description="HEAT 20" evidence="2">
    <location>
        <begin position="1285"/>
        <end position="1323"/>
    </location>
</feature>
<feature type="repeat" description="HEAT 21" evidence="2">
    <location>
        <begin position="1348"/>
        <end position="1386"/>
    </location>
</feature>
<feature type="repeat" description="HEAT 22" evidence="2">
    <location>
        <begin position="1390"/>
        <end position="1427"/>
    </location>
</feature>
<feature type="repeat" description="HEAT 23" evidence="2">
    <location>
        <begin position="1517"/>
        <end position="1554"/>
    </location>
</feature>
<feature type="repeat" description="HEAT 24" evidence="2">
    <location>
        <begin position="1558"/>
        <end position="1595"/>
    </location>
</feature>
<feature type="repeat" description="HEAT 25" evidence="2">
    <location>
        <begin position="1605"/>
        <end position="1642"/>
    </location>
</feature>
<feature type="repeat" description="HEAT 26" evidence="2">
    <location>
        <begin position="1646"/>
        <end position="1683"/>
    </location>
</feature>
<feature type="repeat" description="HEAT 27" evidence="2">
    <location>
        <begin position="1779"/>
        <end position="1822"/>
    </location>
</feature>
<feature type="region of interest" description="Disordered" evidence="3">
    <location>
        <begin position="193"/>
        <end position="217"/>
    </location>
</feature>
<feature type="compositionally biased region" description="Low complexity" evidence="3">
    <location>
        <begin position="193"/>
        <end position="207"/>
    </location>
</feature>
<feature type="modified residue" description="N-acetylalanine" evidence="10 11">
    <location>
        <position position="2"/>
    </location>
</feature>
<feature type="modified residue" description="Phosphoserine" evidence="8">
    <location>
        <position position="830"/>
    </location>
</feature>
<feature type="modified residue" description="Phosphothreonine" evidence="9">
    <location>
        <position position="836"/>
    </location>
</feature>
<feature type="cross-link" description="Glycyl lysine isopeptide (Lys-Gly) (interchain with G-Cter in SUMO1)" evidence="12">
    <location>
        <position position="1039"/>
    </location>
</feature>
<feature type="splice variant" id="VSP_062173" description="In isoform 2.">
    <original>MAAAAASASQDELN</original>
    <variation>MYHIDCRD</variation>
    <location>
        <begin position="1"/>
        <end position="14"/>
    </location>
</feature>
<feature type="sequence variant" id="VAR_055702" description="In dbSNP:rs16916091.">
    <original>T</original>
    <variation>S</variation>
    <location>
        <position position="472"/>
    </location>
</feature>
<feature type="sequence conflict" description="In Ref. 3; AI916718." evidence="6" ref="3">
    <original>I</original>
    <variation>N</variation>
    <location>
        <position position="101"/>
    </location>
</feature>
<accession>Q5VYK3</accession>
<accession>A0A804HJA4</accession>
<accession>B3KXF2</accession>
<accession>O15074</accession>
<accession>Q8WU82</accession>
<organism>
    <name type="scientific">Homo sapiens</name>
    <name type="common">Human</name>
    <dbReference type="NCBI Taxonomy" id="9606"/>
    <lineage>
        <taxon>Eukaryota</taxon>
        <taxon>Metazoa</taxon>
        <taxon>Chordata</taxon>
        <taxon>Craniata</taxon>
        <taxon>Vertebrata</taxon>
        <taxon>Euteleostomi</taxon>
        <taxon>Mammalia</taxon>
        <taxon>Eutheria</taxon>
        <taxon>Euarchontoglires</taxon>
        <taxon>Primates</taxon>
        <taxon>Haplorrhini</taxon>
        <taxon>Catarrhini</taxon>
        <taxon>Hominidae</taxon>
        <taxon>Homo</taxon>
    </lineage>
</organism>
<dbReference type="EMBL" id="AL354661">
    <property type="status" value="NOT_ANNOTATED_CDS"/>
    <property type="molecule type" value="Genomic_DNA"/>
</dbReference>
<dbReference type="EMBL" id="AL159168">
    <property type="status" value="NOT_ANNOTATED_CDS"/>
    <property type="molecule type" value="Genomic_DNA"/>
</dbReference>
<dbReference type="EMBL" id="AK127247">
    <property type="protein sequence ID" value="BAG54464.1"/>
    <property type="status" value="ALT_FRAME"/>
    <property type="molecule type" value="mRNA"/>
</dbReference>
<dbReference type="EMBL" id="AK308313">
    <property type="status" value="NOT_ANNOTATED_CDS"/>
    <property type="molecule type" value="mRNA"/>
</dbReference>
<dbReference type="EMBL" id="AI916718">
    <property type="status" value="NOT_ANNOTATED_CDS"/>
    <property type="molecule type" value="mRNA"/>
</dbReference>
<dbReference type="EMBL" id="BC021127">
    <property type="protein sequence ID" value="AAH21127.1"/>
    <property type="status" value="ALT_INIT"/>
    <property type="molecule type" value="mRNA"/>
</dbReference>
<dbReference type="EMBL" id="AB002366">
    <property type="protein sequence ID" value="BAA20823.1"/>
    <property type="molecule type" value="mRNA"/>
</dbReference>
<dbReference type="CCDS" id="CCDS94456.1">
    <molecule id="Q5VYK3-2"/>
</dbReference>
<dbReference type="RefSeq" id="NP_001351858.1">
    <molecule id="Q5VYK3-2"/>
    <property type="nucleotide sequence ID" value="NM_001364929.1"/>
</dbReference>
<dbReference type="RefSeq" id="NP_001351859.1">
    <molecule id="Q5VYK3-2"/>
    <property type="nucleotide sequence ID" value="NM_001364930.1"/>
</dbReference>
<dbReference type="RefSeq" id="NP_001351860.1">
    <molecule id="Q5VYK3-1"/>
    <property type="nucleotide sequence ID" value="NM_001364931.1"/>
</dbReference>
<dbReference type="RefSeq" id="XP_005251907.1">
    <property type="nucleotide sequence ID" value="XM_005251850.3"/>
</dbReference>
<dbReference type="RefSeq" id="XP_005251908.1">
    <property type="nucleotide sequence ID" value="XM_005251851.4"/>
</dbReference>
<dbReference type="RefSeq" id="XP_005251909.1">
    <property type="nucleotide sequence ID" value="XM_005251852.4"/>
</dbReference>
<dbReference type="RefSeq" id="XP_005251910.1">
    <molecule id="Q5VYK3-2"/>
    <property type="nucleotide sequence ID" value="XM_005251853.4"/>
</dbReference>
<dbReference type="RefSeq" id="XP_047279061.1">
    <molecule id="Q5VYK3-2"/>
    <property type="nucleotide sequence ID" value="XM_047423105.1"/>
</dbReference>
<dbReference type="BioGRID" id="116966">
    <property type="interactions" value="356"/>
</dbReference>
<dbReference type="FunCoup" id="Q5VYK3">
    <property type="interactions" value="3778"/>
</dbReference>
<dbReference type="IntAct" id="Q5VYK3">
    <property type="interactions" value="169"/>
</dbReference>
<dbReference type="MINT" id="Q5VYK3"/>
<dbReference type="STRING" id="9606.ENSP00000259335"/>
<dbReference type="ChEMBL" id="CHEMBL4295853"/>
<dbReference type="GlyCosmos" id="Q5VYK3">
    <property type="glycosylation" value="1 site, 1 glycan"/>
</dbReference>
<dbReference type="GlyGen" id="Q5VYK3">
    <property type="glycosylation" value="10 sites, 5 N-linked glycans (3 sites), 1 O-linked glycan (7 sites)"/>
</dbReference>
<dbReference type="iPTMnet" id="Q5VYK3"/>
<dbReference type="MetOSite" id="Q5VYK3"/>
<dbReference type="PhosphoSitePlus" id="Q5VYK3"/>
<dbReference type="SwissPalm" id="Q5VYK3"/>
<dbReference type="BioMuta" id="KIAA0368"/>
<dbReference type="DMDM" id="61212960"/>
<dbReference type="jPOST" id="Q5VYK3"/>
<dbReference type="MassIVE" id="Q5VYK3"/>
<dbReference type="PaxDb" id="9606-ENSP00000259335"/>
<dbReference type="PeptideAtlas" id="Q5VYK3"/>
<dbReference type="ProteomicsDB" id="65635"/>
<dbReference type="Pumba" id="Q5VYK3"/>
<dbReference type="Antibodypedia" id="29523">
    <property type="antibodies" value="41 antibodies from 14 providers"/>
</dbReference>
<dbReference type="Ensembl" id="ENST00000684092.1">
    <molecule id="Q5VYK3-2"/>
    <property type="protein sequence ID" value="ENSP00000507419.1"/>
    <property type="gene ID" value="ENSG00000136813.15"/>
</dbReference>
<dbReference type="GeneID" id="23392"/>
<dbReference type="MANE-Select" id="ENST00000684092.1">
    <molecule id="Q5VYK3-2"/>
    <property type="protein sequence ID" value="ENSP00000507419.1"/>
    <property type="RefSeq nucleotide sequence ID" value="NM_001364929.1"/>
    <property type="RefSeq protein sequence ID" value="NP_001351858.1"/>
</dbReference>
<dbReference type="UCSC" id="uc064vau.1">
    <molecule id="Q5VYK3-1"/>
    <property type="organism name" value="human"/>
</dbReference>
<dbReference type="AGR" id="HGNC:29020"/>
<dbReference type="CTD" id="23392"/>
<dbReference type="DisGeNET" id="23392"/>
<dbReference type="GeneCards" id="ECPAS"/>
<dbReference type="HGNC" id="HGNC:29020">
    <property type="gene designation" value="ECPAS"/>
</dbReference>
<dbReference type="HPA" id="ENSG00000136813">
    <property type="expression patterns" value="Tissue enhanced (skeletal)"/>
</dbReference>
<dbReference type="MIM" id="616694">
    <property type="type" value="gene"/>
</dbReference>
<dbReference type="neXtProt" id="NX_Q5VYK3"/>
<dbReference type="OpenTargets" id="ENSG00000136813"/>
<dbReference type="VEuPathDB" id="HostDB:ENSG00000136813"/>
<dbReference type="eggNOG" id="KOG0915">
    <property type="taxonomic scope" value="Eukaryota"/>
</dbReference>
<dbReference type="GeneTree" id="ENSGT00940000153612"/>
<dbReference type="HOGENOM" id="CLU_000880_2_0_1"/>
<dbReference type="InParanoid" id="Q5VYK3"/>
<dbReference type="OrthoDB" id="16066at2759"/>
<dbReference type="PAN-GO" id="Q5VYK3">
    <property type="GO annotations" value="4 GO annotations based on evolutionary models"/>
</dbReference>
<dbReference type="PhylomeDB" id="Q5VYK3"/>
<dbReference type="PathwayCommons" id="Q5VYK3"/>
<dbReference type="SignaLink" id="Q5VYK3"/>
<dbReference type="BioGRID-ORCS" id="23392">
    <property type="hits" value="12 hits in 1157 CRISPR screens"/>
</dbReference>
<dbReference type="CD-CODE" id="8C2F96ED">
    <property type="entry name" value="Centrosome"/>
</dbReference>
<dbReference type="ChiTaRS" id="KIAA0368">
    <property type="organism name" value="human"/>
</dbReference>
<dbReference type="GeneWiki" id="KIAA0368"/>
<dbReference type="GenomeRNAi" id="23392"/>
<dbReference type="Pharos" id="Q5VYK3">
    <property type="development level" value="Tbio"/>
</dbReference>
<dbReference type="PRO" id="PR:Q5VYK3"/>
<dbReference type="Proteomes" id="UP000005640">
    <property type="component" value="Chromosome 9"/>
</dbReference>
<dbReference type="RNAct" id="Q5VYK3">
    <property type="molecule type" value="protein"/>
</dbReference>
<dbReference type="Bgee" id="ENSG00000136813">
    <property type="expression patterns" value="Expressed in gastrocnemius and 212 other cell types or tissues"/>
</dbReference>
<dbReference type="ExpressionAtlas" id="Q5VYK3">
    <property type="expression patterns" value="baseline and differential"/>
</dbReference>
<dbReference type="GO" id="GO:0005813">
    <property type="term" value="C:centrosome"/>
    <property type="evidence" value="ECO:0000314"/>
    <property type="project" value="UniProtKB"/>
</dbReference>
<dbReference type="GO" id="GO:0030134">
    <property type="term" value="C:COPII-coated ER to Golgi transport vesicle"/>
    <property type="evidence" value="ECO:0000314"/>
    <property type="project" value="UniProtKB"/>
</dbReference>
<dbReference type="GO" id="GO:0005737">
    <property type="term" value="C:cytoplasm"/>
    <property type="evidence" value="ECO:0000318"/>
    <property type="project" value="GO_Central"/>
</dbReference>
<dbReference type="GO" id="GO:0031410">
    <property type="term" value="C:cytoplasmic vesicle"/>
    <property type="evidence" value="ECO:0000314"/>
    <property type="project" value="UniProtKB"/>
</dbReference>
<dbReference type="GO" id="GO:0005769">
    <property type="term" value="C:early endosome"/>
    <property type="evidence" value="ECO:0000314"/>
    <property type="project" value="UniProtKB"/>
</dbReference>
<dbReference type="GO" id="GO:0030139">
    <property type="term" value="C:endocytic vesicle"/>
    <property type="evidence" value="ECO:0000314"/>
    <property type="project" value="UniProtKB"/>
</dbReference>
<dbReference type="GO" id="GO:0005783">
    <property type="term" value="C:endoplasmic reticulum"/>
    <property type="evidence" value="ECO:0000314"/>
    <property type="project" value="UniProtKB"/>
</dbReference>
<dbReference type="GO" id="GO:0005793">
    <property type="term" value="C:endoplasmic reticulum-Golgi intermediate compartment"/>
    <property type="evidence" value="ECO:0007669"/>
    <property type="project" value="UniProtKB-SubCell"/>
</dbReference>
<dbReference type="GO" id="GO:0005770">
    <property type="term" value="C:late endosome"/>
    <property type="evidence" value="ECO:0000314"/>
    <property type="project" value="UniProtKB"/>
</dbReference>
<dbReference type="GO" id="GO:0016020">
    <property type="term" value="C:membrane"/>
    <property type="evidence" value="ECO:0007005"/>
    <property type="project" value="UniProtKB"/>
</dbReference>
<dbReference type="GO" id="GO:0005771">
    <property type="term" value="C:multivesicular body"/>
    <property type="evidence" value="ECO:0000314"/>
    <property type="project" value="UniProtKB"/>
</dbReference>
<dbReference type="GO" id="GO:0005654">
    <property type="term" value="C:nucleoplasm"/>
    <property type="evidence" value="ECO:0000314"/>
    <property type="project" value="HPA"/>
</dbReference>
<dbReference type="GO" id="GO:0005634">
    <property type="term" value="C:nucleus"/>
    <property type="evidence" value="ECO:0000314"/>
    <property type="project" value="UniProtKB"/>
</dbReference>
<dbReference type="GO" id="GO:0000502">
    <property type="term" value="C:proteasome complex"/>
    <property type="evidence" value="ECO:0007669"/>
    <property type="project" value="UniProtKB-KW"/>
</dbReference>
<dbReference type="GO" id="GO:0060090">
    <property type="term" value="F:molecular adaptor activity"/>
    <property type="evidence" value="ECO:0000318"/>
    <property type="project" value="GO_Central"/>
</dbReference>
<dbReference type="GO" id="GO:0070628">
    <property type="term" value="F:proteasome binding"/>
    <property type="evidence" value="ECO:0000314"/>
    <property type="project" value="UniProtKB"/>
</dbReference>
<dbReference type="GO" id="GO:0036503">
    <property type="term" value="P:ERAD pathway"/>
    <property type="evidence" value="ECO:0000315"/>
    <property type="project" value="UniProtKB"/>
</dbReference>
<dbReference type="GO" id="GO:0043248">
    <property type="term" value="P:proteasome assembly"/>
    <property type="evidence" value="ECO:0007669"/>
    <property type="project" value="InterPro"/>
</dbReference>
<dbReference type="FunFam" id="1.25.10.10:FF:000174">
    <property type="entry name" value="Ecm29 proteasome adaptor and scaffold"/>
    <property type="match status" value="1"/>
</dbReference>
<dbReference type="FunFam" id="1.25.10.10:FF:000190">
    <property type="entry name" value="Ecm29 proteasome adaptor and scaffold"/>
    <property type="match status" value="1"/>
</dbReference>
<dbReference type="FunFam" id="1.25.10.10:FF:000197">
    <property type="entry name" value="Ecm29 proteasome adaptor and scaffold"/>
    <property type="match status" value="1"/>
</dbReference>
<dbReference type="FunFam" id="1.25.10.10:FF:000233">
    <property type="entry name" value="Ecm29 proteasome adaptor and scaffold"/>
    <property type="match status" value="1"/>
</dbReference>
<dbReference type="Gene3D" id="1.25.10.10">
    <property type="entry name" value="Leucine-rich Repeat Variant"/>
    <property type="match status" value="4"/>
</dbReference>
<dbReference type="InterPro" id="IPR011989">
    <property type="entry name" value="ARM-like"/>
</dbReference>
<dbReference type="InterPro" id="IPR016024">
    <property type="entry name" value="ARM-type_fold"/>
</dbReference>
<dbReference type="InterPro" id="IPR055444">
    <property type="entry name" value="ARM_ECM29"/>
</dbReference>
<dbReference type="InterPro" id="IPR024372">
    <property type="entry name" value="Ecm29_N"/>
</dbReference>
<dbReference type="InterPro" id="IPR055443">
    <property type="entry name" value="HEAT_ECM29"/>
</dbReference>
<dbReference type="PANTHER" id="PTHR23346:SF19">
    <property type="entry name" value="PROTEASOME ADAPTER AND SCAFFOLD PROTEIN ECM29"/>
    <property type="match status" value="1"/>
</dbReference>
<dbReference type="PANTHER" id="PTHR23346">
    <property type="entry name" value="TRANSLATIONAL ACTIVATOR GCN1-RELATED"/>
    <property type="match status" value="1"/>
</dbReference>
<dbReference type="Pfam" id="PF23702">
    <property type="entry name" value="ARM_ECM29"/>
    <property type="match status" value="1"/>
</dbReference>
<dbReference type="Pfam" id="PF23731">
    <property type="entry name" value="ARM_ECM29_C"/>
    <property type="match status" value="1"/>
</dbReference>
<dbReference type="Pfam" id="PF13001">
    <property type="entry name" value="ECM29_N"/>
    <property type="match status" value="1"/>
</dbReference>
<dbReference type="Pfam" id="PF24492">
    <property type="entry name" value="HEAT_ECM29"/>
    <property type="match status" value="1"/>
</dbReference>
<dbReference type="Pfam" id="PF12755">
    <property type="entry name" value="Vac14_Fab1_bd"/>
    <property type="match status" value="1"/>
</dbReference>
<dbReference type="SUPFAM" id="SSF48371">
    <property type="entry name" value="ARM repeat"/>
    <property type="match status" value="3"/>
</dbReference>
<protein>
    <recommendedName>
        <fullName evidence="6">Proteasome adapter and scaffold protein ECM29</fullName>
    </recommendedName>
    <alternativeName>
        <fullName evidence="7">Ecm29 proteasome adapter and scaffold</fullName>
    </alternativeName>
    <alternativeName>
        <fullName>Proteasome-associated protein ECM29 homolog</fullName>
    </alternativeName>
</protein>
<reference key="1">
    <citation type="journal article" date="2004" name="Nat. Genet.">
        <title>Complete sequencing and characterization of 21,243 full-length human cDNAs.</title>
        <authorList>
            <person name="Ota T."/>
            <person name="Suzuki Y."/>
            <person name="Nishikawa T."/>
            <person name="Otsuki T."/>
            <person name="Sugiyama T."/>
            <person name="Irie R."/>
            <person name="Wakamatsu A."/>
            <person name="Hayashi K."/>
            <person name="Sato H."/>
            <person name="Nagai K."/>
            <person name="Kimura K."/>
            <person name="Makita H."/>
            <person name="Sekine M."/>
            <person name="Obayashi M."/>
            <person name="Nishi T."/>
            <person name="Shibahara T."/>
            <person name="Tanaka T."/>
            <person name="Ishii S."/>
            <person name="Yamamoto J."/>
            <person name="Saito K."/>
            <person name="Kawai Y."/>
            <person name="Isono Y."/>
            <person name="Nakamura Y."/>
            <person name="Nagahari K."/>
            <person name="Murakami K."/>
            <person name="Yasuda T."/>
            <person name="Iwayanagi T."/>
            <person name="Wagatsuma M."/>
            <person name="Shiratori A."/>
            <person name="Sudo H."/>
            <person name="Hosoiri T."/>
            <person name="Kaku Y."/>
            <person name="Kodaira H."/>
            <person name="Kondo H."/>
            <person name="Sugawara M."/>
            <person name="Takahashi M."/>
            <person name="Kanda K."/>
            <person name="Yokoi T."/>
            <person name="Furuya T."/>
            <person name="Kikkawa E."/>
            <person name="Omura Y."/>
            <person name="Abe K."/>
            <person name="Kamihara K."/>
            <person name="Katsuta N."/>
            <person name="Sato K."/>
            <person name="Tanikawa M."/>
            <person name="Yamazaki M."/>
            <person name="Ninomiya K."/>
            <person name="Ishibashi T."/>
            <person name="Yamashita H."/>
            <person name="Murakawa K."/>
            <person name="Fujimori K."/>
            <person name="Tanai H."/>
            <person name="Kimata M."/>
            <person name="Watanabe M."/>
            <person name="Hiraoka S."/>
            <person name="Chiba Y."/>
            <person name="Ishida S."/>
            <person name="Ono Y."/>
            <person name="Takiguchi S."/>
            <person name="Watanabe S."/>
            <person name="Yosida M."/>
            <person name="Hotuta T."/>
            <person name="Kusano J."/>
            <person name="Kanehori K."/>
            <person name="Takahashi-Fujii A."/>
            <person name="Hara H."/>
            <person name="Tanase T.-O."/>
            <person name="Nomura Y."/>
            <person name="Togiya S."/>
            <person name="Komai F."/>
            <person name="Hara R."/>
            <person name="Takeuchi K."/>
            <person name="Arita M."/>
            <person name="Imose N."/>
            <person name="Musashino K."/>
            <person name="Yuuki H."/>
            <person name="Oshima A."/>
            <person name="Sasaki N."/>
            <person name="Aotsuka S."/>
            <person name="Yoshikawa Y."/>
            <person name="Matsunawa H."/>
            <person name="Ichihara T."/>
            <person name="Shiohata N."/>
            <person name="Sano S."/>
            <person name="Moriya S."/>
            <person name="Momiyama H."/>
            <person name="Satoh N."/>
            <person name="Takami S."/>
            <person name="Terashima Y."/>
            <person name="Suzuki O."/>
            <person name="Nakagawa S."/>
            <person name="Senoh A."/>
            <person name="Mizoguchi H."/>
            <person name="Goto Y."/>
            <person name="Shimizu F."/>
            <person name="Wakebe H."/>
            <person name="Hishigaki H."/>
            <person name="Watanabe T."/>
            <person name="Sugiyama A."/>
            <person name="Takemoto M."/>
            <person name="Kawakami B."/>
            <person name="Yamazaki M."/>
            <person name="Watanabe K."/>
            <person name="Kumagai A."/>
            <person name="Itakura S."/>
            <person name="Fukuzumi Y."/>
            <person name="Fujimori Y."/>
            <person name="Komiyama M."/>
            <person name="Tashiro H."/>
            <person name="Tanigami A."/>
            <person name="Fujiwara T."/>
            <person name="Ono T."/>
            <person name="Yamada K."/>
            <person name="Fujii Y."/>
            <person name="Ozaki K."/>
            <person name="Hirao M."/>
            <person name="Ohmori Y."/>
            <person name="Kawabata A."/>
            <person name="Hikiji T."/>
            <person name="Kobatake N."/>
            <person name="Inagaki H."/>
            <person name="Ikema Y."/>
            <person name="Okamoto S."/>
            <person name="Okitani R."/>
            <person name="Kawakami T."/>
            <person name="Noguchi S."/>
            <person name="Itoh T."/>
            <person name="Shigeta K."/>
            <person name="Senba T."/>
            <person name="Matsumura K."/>
            <person name="Nakajima Y."/>
            <person name="Mizuno T."/>
            <person name="Morinaga M."/>
            <person name="Sasaki M."/>
            <person name="Togashi T."/>
            <person name="Oyama M."/>
            <person name="Hata H."/>
            <person name="Watanabe M."/>
            <person name="Komatsu T."/>
            <person name="Mizushima-Sugano J."/>
            <person name="Satoh T."/>
            <person name="Shirai Y."/>
            <person name="Takahashi Y."/>
            <person name="Nakagawa K."/>
            <person name="Okumura K."/>
            <person name="Nagase T."/>
            <person name="Nomura N."/>
            <person name="Kikuchi H."/>
            <person name="Masuho Y."/>
            <person name="Yamashita R."/>
            <person name="Nakai K."/>
            <person name="Yada T."/>
            <person name="Nakamura Y."/>
            <person name="Ohara O."/>
            <person name="Isogai T."/>
            <person name="Sugano S."/>
        </authorList>
    </citation>
    <scope>NUCLEOTIDE SEQUENCE [LARGE SCALE MRNA] (ISOFORM 2)</scope>
    <source>
        <tissue>Hippocampus</tissue>
    </source>
</reference>
<reference key="2">
    <citation type="journal article" date="2004" name="Nature">
        <title>DNA sequence and analysis of human chromosome 9.</title>
        <authorList>
            <person name="Humphray S.J."/>
            <person name="Oliver K."/>
            <person name="Hunt A.R."/>
            <person name="Plumb R.W."/>
            <person name="Loveland J.E."/>
            <person name="Howe K.L."/>
            <person name="Andrews T.D."/>
            <person name="Searle S."/>
            <person name="Hunt S.E."/>
            <person name="Scott C.E."/>
            <person name="Jones M.C."/>
            <person name="Ainscough R."/>
            <person name="Almeida J.P."/>
            <person name="Ambrose K.D."/>
            <person name="Ashwell R.I.S."/>
            <person name="Babbage A.K."/>
            <person name="Babbage S."/>
            <person name="Bagguley C.L."/>
            <person name="Bailey J."/>
            <person name="Banerjee R."/>
            <person name="Barker D.J."/>
            <person name="Barlow K.F."/>
            <person name="Bates K."/>
            <person name="Beasley H."/>
            <person name="Beasley O."/>
            <person name="Bird C.P."/>
            <person name="Bray-Allen S."/>
            <person name="Brown A.J."/>
            <person name="Brown J.Y."/>
            <person name="Burford D."/>
            <person name="Burrill W."/>
            <person name="Burton J."/>
            <person name="Carder C."/>
            <person name="Carter N.P."/>
            <person name="Chapman J.C."/>
            <person name="Chen Y."/>
            <person name="Clarke G."/>
            <person name="Clark S.Y."/>
            <person name="Clee C.M."/>
            <person name="Clegg S."/>
            <person name="Collier R.E."/>
            <person name="Corby N."/>
            <person name="Crosier M."/>
            <person name="Cummings A.T."/>
            <person name="Davies J."/>
            <person name="Dhami P."/>
            <person name="Dunn M."/>
            <person name="Dutta I."/>
            <person name="Dyer L.W."/>
            <person name="Earthrowl M.E."/>
            <person name="Faulkner L."/>
            <person name="Fleming C.J."/>
            <person name="Frankish A."/>
            <person name="Frankland J.A."/>
            <person name="French L."/>
            <person name="Fricker D.G."/>
            <person name="Garner P."/>
            <person name="Garnett J."/>
            <person name="Ghori J."/>
            <person name="Gilbert J.G.R."/>
            <person name="Glison C."/>
            <person name="Grafham D.V."/>
            <person name="Gribble S."/>
            <person name="Griffiths C."/>
            <person name="Griffiths-Jones S."/>
            <person name="Grocock R."/>
            <person name="Guy J."/>
            <person name="Hall R.E."/>
            <person name="Hammond S."/>
            <person name="Harley J.L."/>
            <person name="Harrison E.S.I."/>
            <person name="Hart E.A."/>
            <person name="Heath P.D."/>
            <person name="Henderson C.D."/>
            <person name="Hopkins B.L."/>
            <person name="Howard P.J."/>
            <person name="Howden P.J."/>
            <person name="Huckle E."/>
            <person name="Johnson C."/>
            <person name="Johnson D."/>
            <person name="Joy A.A."/>
            <person name="Kay M."/>
            <person name="Keenan S."/>
            <person name="Kershaw J.K."/>
            <person name="Kimberley A.M."/>
            <person name="King A."/>
            <person name="Knights A."/>
            <person name="Laird G.K."/>
            <person name="Langford C."/>
            <person name="Lawlor S."/>
            <person name="Leongamornlert D.A."/>
            <person name="Leversha M."/>
            <person name="Lloyd C."/>
            <person name="Lloyd D.M."/>
            <person name="Lovell J."/>
            <person name="Martin S."/>
            <person name="Mashreghi-Mohammadi M."/>
            <person name="Matthews L."/>
            <person name="McLaren S."/>
            <person name="McLay K.E."/>
            <person name="McMurray A."/>
            <person name="Milne S."/>
            <person name="Nickerson T."/>
            <person name="Nisbett J."/>
            <person name="Nordsiek G."/>
            <person name="Pearce A.V."/>
            <person name="Peck A.I."/>
            <person name="Porter K.M."/>
            <person name="Pandian R."/>
            <person name="Pelan S."/>
            <person name="Phillimore B."/>
            <person name="Povey S."/>
            <person name="Ramsey Y."/>
            <person name="Rand V."/>
            <person name="Scharfe M."/>
            <person name="Sehra H.K."/>
            <person name="Shownkeen R."/>
            <person name="Sims S.K."/>
            <person name="Skuce C.D."/>
            <person name="Smith M."/>
            <person name="Steward C.A."/>
            <person name="Swarbreck D."/>
            <person name="Sycamore N."/>
            <person name="Tester J."/>
            <person name="Thorpe A."/>
            <person name="Tracey A."/>
            <person name="Tromans A."/>
            <person name="Thomas D.W."/>
            <person name="Wall M."/>
            <person name="Wallis J.M."/>
            <person name="West A.P."/>
            <person name="Whitehead S.L."/>
            <person name="Willey D.L."/>
            <person name="Williams S.A."/>
            <person name="Wilming L."/>
            <person name="Wray P.W."/>
            <person name="Young L."/>
            <person name="Ashurst J.L."/>
            <person name="Coulson A."/>
            <person name="Blocker H."/>
            <person name="Durbin R.M."/>
            <person name="Sulston J.E."/>
            <person name="Hubbard T."/>
            <person name="Jackson M.J."/>
            <person name="Bentley D.R."/>
            <person name="Beck S."/>
            <person name="Rogers J."/>
            <person name="Dunham I."/>
        </authorList>
    </citation>
    <scope>NUCLEOTIDE SEQUENCE [LARGE SCALE GENOMIC DNA]</scope>
</reference>
<reference key="3">
    <citation type="journal article" date="2004" name="Genome Res.">
        <title>The status, quality, and expansion of the NIH full-length cDNA project: the Mammalian Gene Collection (MGC).</title>
        <authorList>
            <consortium name="The MGC Project Team"/>
        </authorList>
    </citation>
    <scope>NUCLEOTIDE SEQUENCE [LARGE SCALE MRNA] OF 3-194 (ISOFORM 1)</scope>
    <scope>NUCLEOTIDE SEQUENCE [LARGE SCALE MRNA] OF 1301-1845 (ISOFORM 1)</scope>
    <source>
        <tissue>B-cell</tissue>
    </source>
</reference>
<reference key="4">
    <citation type="journal article" date="1997" name="DNA Res.">
        <title>Prediction of the coding sequences of unidentified human genes. VII. The complete sequences of 100 new cDNA clones from brain which can code for large proteins in vitro.</title>
        <authorList>
            <person name="Nagase T."/>
            <person name="Ishikawa K."/>
            <person name="Nakajima D."/>
            <person name="Ohira M."/>
            <person name="Seki N."/>
            <person name="Miyajima N."/>
            <person name="Tanaka A."/>
            <person name="Kotani H."/>
            <person name="Nomura N."/>
            <person name="Ohara O."/>
        </authorList>
    </citation>
    <scope>NUCLEOTIDE SEQUENCE [LARGE SCALE MRNA] OF 405-1845 (ISOFORM 1/2)</scope>
    <source>
        <tissue>Brain</tissue>
    </source>
</reference>
<reference key="5">
    <citation type="journal article" date="2004" name="J. Biol. Chem.">
        <title>Characterization of mammalian Ecm29, a 26 S proteasome-associated protein that localizes to the nucleus and membrane vesicles.</title>
        <authorList>
            <person name="Gorbea C."/>
            <person name="Goellner G.M."/>
            <person name="Teter K."/>
            <person name="Holmes R.K."/>
            <person name="Rechsteiner M."/>
        </authorList>
    </citation>
    <scope>FUNCTION</scope>
    <scope>SUBUNIT</scope>
    <scope>SUBCELLULAR LOCATION</scope>
    <scope>TISSUE SPECIFICITY</scope>
</reference>
<reference key="6">
    <citation type="journal article" date="2010" name="J. Biol. Chem.">
        <title>A protein interaction network for Ecm29 links the 26 S proteasome to molecular motors and endosomal components.</title>
        <authorList>
            <person name="Gorbea C."/>
            <person name="Pratt G."/>
            <person name="Ustrell V."/>
            <person name="Bell R."/>
            <person name="Sahasrabudhe S."/>
            <person name="Hughes R.E."/>
            <person name="Rechsteiner M."/>
        </authorList>
    </citation>
    <scope>FUNCTION</scope>
    <scope>SUBCELLULAR LOCATION</scope>
    <scope>INTERACTION WITH VPS11; VPS26A; VPS36; RAB11FIP4; RABEP1; DCTN1; DCTN2; KIF5B; MYH7; MYH10; MYO10 AND ARF6</scope>
</reference>
<reference key="7">
    <citation type="journal article" date="2010" name="Sci. Signal.">
        <title>Quantitative phosphoproteomics reveals widespread full phosphorylation site occupancy during mitosis.</title>
        <authorList>
            <person name="Olsen J.V."/>
            <person name="Vermeulen M."/>
            <person name="Santamaria A."/>
            <person name="Kumar C."/>
            <person name="Miller M.L."/>
            <person name="Jensen L.J."/>
            <person name="Gnad F."/>
            <person name="Cox J."/>
            <person name="Jensen T.S."/>
            <person name="Nigg E.A."/>
            <person name="Brunak S."/>
            <person name="Mann M."/>
        </authorList>
    </citation>
    <scope>PHOSPHORYLATION [LARGE SCALE ANALYSIS] AT SER-830</scope>
    <scope>IDENTIFICATION BY MASS SPECTROMETRY [LARGE SCALE ANALYSIS]</scope>
    <source>
        <tissue>Cervix carcinoma</tissue>
    </source>
</reference>
<reference key="8">
    <citation type="journal article" date="2011" name="BMC Syst. Biol.">
        <title>Initial characterization of the human central proteome.</title>
        <authorList>
            <person name="Burkard T.R."/>
            <person name="Planyavsky M."/>
            <person name="Kaupe I."/>
            <person name="Breitwieser F.P."/>
            <person name="Buerckstuemmer T."/>
            <person name="Bennett K.L."/>
            <person name="Superti-Furga G."/>
            <person name="Colinge J."/>
        </authorList>
    </citation>
    <scope>IDENTIFICATION BY MASS SPECTROMETRY [LARGE SCALE ANALYSIS]</scope>
</reference>
<reference key="9">
    <citation type="journal article" date="2011" name="Sci. Signal.">
        <title>System-wide temporal characterization of the proteome and phosphoproteome of human embryonic stem cell differentiation.</title>
        <authorList>
            <person name="Rigbolt K.T."/>
            <person name="Prokhorova T.A."/>
            <person name="Akimov V."/>
            <person name="Henningsen J."/>
            <person name="Johansen P.T."/>
            <person name="Kratchmarova I."/>
            <person name="Kassem M."/>
            <person name="Mann M."/>
            <person name="Olsen J.V."/>
            <person name="Blagoev B."/>
        </authorList>
    </citation>
    <scope>PHOSPHORYLATION [LARGE SCALE ANALYSIS] AT THR-836</scope>
    <scope>IDENTIFICATION BY MASS SPECTROMETRY [LARGE SCALE ANALYSIS]</scope>
</reference>
<reference key="10">
    <citation type="journal article" date="2012" name="Mol. Cell. Proteomics">
        <title>Comparative large-scale characterisation of plant vs. mammal proteins reveals similar and idiosyncratic N-alpha acetylation features.</title>
        <authorList>
            <person name="Bienvenut W.V."/>
            <person name="Sumpton D."/>
            <person name="Martinez A."/>
            <person name="Lilla S."/>
            <person name="Espagne C."/>
            <person name="Meinnel T."/>
            <person name="Giglione C."/>
        </authorList>
    </citation>
    <scope>ACETYLATION [LARGE SCALE ANALYSIS] AT ALA-2</scope>
    <scope>CLEAVAGE OF INITIATOR METHIONINE [LARGE SCALE ANALYSIS]</scope>
    <scope>IDENTIFICATION BY MASS SPECTROMETRY [LARGE SCALE ANALYSIS]</scope>
</reference>
<reference key="11">
    <citation type="journal article" date="2012" name="Proc. Natl. Acad. Sci. U.S.A.">
        <title>N-terminal acetylome analyses and functional insights of the N-terminal acetyltransferase NatB.</title>
        <authorList>
            <person name="Van Damme P."/>
            <person name="Lasa M."/>
            <person name="Polevoda B."/>
            <person name="Gazquez C."/>
            <person name="Elosegui-Artola A."/>
            <person name="Kim D.S."/>
            <person name="De Juan-Pardo E."/>
            <person name="Demeyer K."/>
            <person name="Hole K."/>
            <person name="Larrea E."/>
            <person name="Timmerman E."/>
            <person name="Prieto J."/>
            <person name="Arnesen T."/>
            <person name="Sherman F."/>
            <person name="Gevaert K."/>
            <person name="Aldabe R."/>
        </authorList>
    </citation>
    <scope>ACETYLATION [LARGE SCALE ANALYSIS] AT ALA-2</scope>
    <scope>CLEAVAGE OF INITIATOR METHIONINE [LARGE SCALE ANALYSIS]</scope>
    <scope>IDENTIFICATION BY MASS SPECTROMETRY [LARGE SCALE ANALYSIS]</scope>
</reference>
<reference key="12">
    <citation type="journal article" date="2013" name="J. Proteome Res.">
        <title>Toward a comprehensive characterization of a human cancer cell phosphoproteome.</title>
        <authorList>
            <person name="Zhou H."/>
            <person name="Di Palma S."/>
            <person name="Preisinger C."/>
            <person name="Peng M."/>
            <person name="Polat A.N."/>
            <person name="Heck A.J."/>
            <person name="Mohammed S."/>
        </authorList>
    </citation>
    <scope>IDENTIFICATION BY MASS SPECTROMETRY [LARGE SCALE ANALYSIS]</scope>
    <source>
        <tissue>Cervix carcinoma</tissue>
        <tissue>Erythroleukemia</tissue>
    </source>
</reference>
<reference key="13">
    <citation type="journal article" date="2014" name="Proc. Natl. Acad. Sci. U.S.A.">
        <title>Mapping of SUMO sites and analysis of SUMOylation changes induced by external stimuli.</title>
        <authorList>
            <person name="Impens F."/>
            <person name="Radoshevich L."/>
            <person name="Cossart P."/>
            <person name="Ribet D."/>
        </authorList>
    </citation>
    <scope>SUMOYLATION [LARGE SCALE ANALYSIS] AT LYS-1039</scope>
    <scope>IDENTIFICATION BY MASS SPECTROMETRY [LARGE SCALE ANALYSIS]</scope>
</reference>